<organism>
    <name type="scientific">Yersinia pseudotuberculosis serotype O:3 (strain YPIII)</name>
    <dbReference type="NCBI Taxonomy" id="502800"/>
    <lineage>
        <taxon>Bacteria</taxon>
        <taxon>Pseudomonadati</taxon>
        <taxon>Pseudomonadota</taxon>
        <taxon>Gammaproteobacteria</taxon>
        <taxon>Enterobacterales</taxon>
        <taxon>Yersiniaceae</taxon>
        <taxon>Yersinia</taxon>
    </lineage>
</organism>
<protein>
    <recommendedName>
        <fullName evidence="1">Large ribosomal subunit protein uL29</fullName>
    </recommendedName>
    <alternativeName>
        <fullName evidence="2">50S ribosomal protein L29</fullName>
    </alternativeName>
</protein>
<accession>B1JIW9</accession>
<sequence length="63" mass="7273">MKAQELREKSVEELNTELLNLLREQFNLRMQAASGQLQQTHLLKQVRRNVARVKTLLTEKAGA</sequence>
<name>RL29_YERPY</name>
<keyword id="KW-0687">Ribonucleoprotein</keyword>
<keyword id="KW-0689">Ribosomal protein</keyword>
<reference key="1">
    <citation type="submission" date="2008-02" db="EMBL/GenBank/DDBJ databases">
        <title>Complete sequence of Yersinia pseudotuberculosis YPIII.</title>
        <authorList>
            <consortium name="US DOE Joint Genome Institute"/>
            <person name="Copeland A."/>
            <person name="Lucas S."/>
            <person name="Lapidus A."/>
            <person name="Glavina del Rio T."/>
            <person name="Dalin E."/>
            <person name="Tice H."/>
            <person name="Bruce D."/>
            <person name="Goodwin L."/>
            <person name="Pitluck S."/>
            <person name="Munk A.C."/>
            <person name="Brettin T."/>
            <person name="Detter J.C."/>
            <person name="Han C."/>
            <person name="Tapia R."/>
            <person name="Schmutz J."/>
            <person name="Larimer F."/>
            <person name="Land M."/>
            <person name="Hauser L."/>
            <person name="Challacombe J.F."/>
            <person name="Green L."/>
            <person name="Lindler L.E."/>
            <person name="Nikolich M.P."/>
            <person name="Richardson P."/>
        </authorList>
    </citation>
    <scope>NUCLEOTIDE SEQUENCE [LARGE SCALE GENOMIC DNA]</scope>
    <source>
        <strain>YPIII</strain>
    </source>
</reference>
<comment type="similarity">
    <text evidence="1">Belongs to the universal ribosomal protein uL29 family.</text>
</comment>
<gene>
    <name evidence="1" type="primary">rpmC</name>
    <name type="ordered locus">YPK_0291</name>
</gene>
<dbReference type="EMBL" id="CP000950">
    <property type="protein sequence ID" value="ACA66604.1"/>
    <property type="molecule type" value="Genomic_DNA"/>
</dbReference>
<dbReference type="RefSeq" id="WP_002218942.1">
    <property type="nucleotide sequence ID" value="NZ_CP009792.1"/>
</dbReference>
<dbReference type="SMR" id="B1JIW9"/>
<dbReference type="GeneID" id="96663188"/>
<dbReference type="KEGG" id="ypy:YPK_0291"/>
<dbReference type="PATRIC" id="fig|502800.11.peg.898"/>
<dbReference type="GO" id="GO:0022625">
    <property type="term" value="C:cytosolic large ribosomal subunit"/>
    <property type="evidence" value="ECO:0007669"/>
    <property type="project" value="TreeGrafter"/>
</dbReference>
<dbReference type="GO" id="GO:0003735">
    <property type="term" value="F:structural constituent of ribosome"/>
    <property type="evidence" value="ECO:0007669"/>
    <property type="project" value="InterPro"/>
</dbReference>
<dbReference type="GO" id="GO:0006412">
    <property type="term" value="P:translation"/>
    <property type="evidence" value="ECO:0007669"/>
    <property type="project" value="UniProtKB-UniRule"/>
</dbReference>
<dbReference type="CDD" id="cd00427">
    <property type="entry name" value="Ribosomal_L29_HIP"/>
    <property type="match status" value="1"/>
</dbReference>
<dbReference type="FunFam" id="1.10.287.310:FF:000001">
    <property type="entry name" value="50S ribosomal protein L29"/>
    <property type="match status" value="1"/>
</dbReference>
<dbReference type="Gene3D" id="6.10.140.1970">
    <property type="match status" value="1"/>
</dbReference>
<dbReference type="HAMAP" id="MF_00374">
    <property type="entry name" value="Ribosomal_uL29"/>
    <property type="match status" value="1"/>
</dbReference>
<dbReference type="InterPro" id="IPR050063">
    <property type="entry name" value="Ribosomal_protein_uL29"/>
</dbReference>
<dbReference type="InterPro" id="IPR001854">
    <property type="entry name" value="Ribosomal_uL29"/>
</dbReference>
<dbReference type="InterPro" id="IPR018254">
    <property type="entry name" value="Ribosomal_uL29_CS"/>
</dbReference>
<dbReference type="InterPro" id="IPR036049">
    <property type="entry name" value="Ribosomal_uL29_sf"/>
</dbReference>
<dbReference type="NCBIfam" id="TIGR00012">
    <property type="entry name" value="L29"/>
    <property type="match status" value="1"/>
</dbReference>
<dbReference type="PANTHER" id="PTHR10916">
    <property type="entry name" value="60S RIBOSOMAL PROTEIN L35/50S RIBOSOMAL PROTEIN L29"/>
    <property type="match status" value="1"/>
</dbReference>
<dbReference type="PANTHER" id="PTHR10916:SF0">
    <property type="entry name" value="LARGE RIBOSOMAL SUBUNIT PROTEIN UL29C"/>
    <property type="match status" value="1"/>
</dbReference>
<dbReference type="Pfam" id="PF00831">
    <property type="entry name" value="Ribosomal_L29"/>
    <property type="match status" value="1"/>
</dbReference>
<dbReference type="SUPFAM" id="SSF46561">
    <property type="entry name" value="Ribosomal protein L29 (L29p)"/>
    <property type="match status" value="1"/>
</dbReference>
<dbReference type="PROSITE" id="PS00579">
    <property type="entry name" value="RIBOSOMAL_L29"/>
    <property type="match status" value="1"/>
</dbReference>
<proteinExistence type="inferred from homology"/>
<feature type="chain" id="PRO_1000121844" description="Large ribosomal subunit protein uL29">
    <location>
        <begin position="1"/>
        <end position="63"/>
    </location>
</feature>
<evidence type="ECO:0000255" key="1">
    <source>
        <dbReference type="HAMAP-Rule" id="MF_00374"/>
    </source>
</evidence>
<evidence type="ECO:0000305" key="2"/>